<protein>
    <recommendedName>
        <fullName evidence="1">Cell division topological specificity factor</fullName>
    </recommendedName>
</protein>
<proteinExistence type="inferred from homology"/>
<sequence>MALLDFFLSRKKNTANIAKERLQIIVAERRRGDAEPHYLPQLRKDILEVICKYVQIDPEMVSVQLEQRDGDISILELNVTLPETEESKP</sequence>
<reference key="1">
    <citation type="journal article" date="2008" name="PLoS Genet.">
        <title>Complete genome sequence of the N2-fixing broad host range endophyte Klebsiella pneumoniae 342 and virulence predictions verified in mice.</title>
        <authorList>
            <person name="Fouts D.E."/>
            <person name="Tyler H.L."/>
            <person name="DeBoy R.T."/>
            <person name="Daugherty S."/>
            <person name="Ren Q."/>
            <person name="Badger J.H."/>
            <person name="Durkin A.S."/>
            <person name="Huot H."/>
            <person name="Shrivastava S."/>
            <person name="Kothari S."/>
            <person name="Dodson R.J."/>
            <person name="Mohamoud Y."/>
            <person name="Khouri H."/>
            <person name="Roesch L.F.W."/>
            <person name="Krogfelt K.A."/>
            <person name="Struve C."/>
            <person name="Triplett E.W."/>
            <person name="Methe B.A."/>
        </authorList>
    </citation>
    <scope>NUCLEOTIDE SEQUENCE [LARGE SCALE GENOMIC DNA]</scope>
    <source>
        <strain>342</strain>
    </source>
</reference>
<comment type="function">
    <text evidence="1">Prevents the cell division inhibition by proteins MinC and MinD at internal division sites while permitting inhibition at polar sites. This ensures cell division at the proper site by restricting the formation of a division septum at the midpoint of the long axis of the cell.</text>
</comment>
<comment type="similarity">
    <text evidence="1">Belongs to the MinE family.</text>
</comment>
<feature type="chain" id="PRO_1000114227" description="Cell division topological specificity factor">
    <location>
        <begin position="1"/>
        <end position="89"/>
    </location>
</feature>
<dbReference type="EMBL" id="CP000964">
    <property type="protein sequence ID" value="ACI06693.1"/>
    <property type="molecule type" value="Genomic_DNA"/>
</dbReference>
<dbReference type="SMR" id="B5XQ69"/>
<dbReference type="KEGG" id="kpe:KPK_1973"/>
<dbReference type="HOGENOM" id="CLU_137929_2_2_6"/>
<dbReference type="Proteomes" id="UP000001734">
    <property type="component" value="Chromosome"/>
</dbReference>
<dbReference type="GO" id="GO:0051301">
    <property type="term" value="P:cell division"/>
    <property type="evidence" value="ECO:0007669"/>
    <property type="project" value="UniProtKB-KW"/>
</dbReference>
<dbReference type="GO" id="GO:0032955">
    <property type="term" value="P:regulation of division septum assembly"/>
    <property type="evidence" value="ECO:0007669"/>
    <property type="project" value="InterPro"/>
</dbReference>
<dbReference type="FunFam" id="3.30.1070.10:FF:000001">
    <property type="entry name" value="Cell division topological specificity factor"/>
    <property type="match status" value="1"/>
</dbReference>
<dbReference type="Gene3D" id="3.30.1070.10">
    <property type="entry name" value="Cell division topological specificity factor MinE"/>
    <property type="match status" value="1"/>
</dbReference>
<dbReference type="HAMAP" id="MF_00262">
    <property type="entry name" value="MinE"/>
    <property type="match status" value="1"/>
</dbReference>
<dbReference type="InterPro" id="IPR005527">
    <property type="entry name" value="MinE"/>
</dbReference>
<dbReference type="InterPro" id="IPR036707">
    <property type="entry name" value="MinE_sf"/>
</dbReference>
<dbReference type="NCBIfam" id="TIGR01215">
    <property type="entry name" value="minE"/>
    <property type="match status" value="1"/>
</dbReference>
<dbReference type="NCBIfam" id="NF001422">
    <property type="entry name" value="PRK00296.1"/>
    <property type="match status" value="1"/>
</dbReference>
<dbReference type="Pfam" id="PF03776">
    <property type="entry name" value="MinE"/>
    <property type="match status" value="1"/>
</dbReference>
<dbReference type="SUPFAM" id="SSF55229">
    <property type="entry name" value="Cell division protein MinE topological specificity domain"/>
    <property type="match status" value="1"/>
</dbReference>
<organism>
    <name type="scientific">Klebsiella pneumoniae (strain 342)</name>
    <dbReference type="NCBI Taxonomy" id="507522"/>
    <lineage>
        <taxon>Bacteria</taxon>
        <taxon>Pseudomonadati</taxon>
        <taxon>Pseudomonadota</taxon>
        <taxon>Gammaproteobacteria</taxon>
        <taxon>Enterobacterales</taxon>
        <taxon>Enterobacteriaceae</taxon>
        <taxon>Klebsiella/Raoultella group</taxon>
        <taxon>Klebsiella</taxon>
        <taxon>Klebsiella pneumoniae complex</taxon>
    </lineage>
</organism>
<keyword id="KW-0131">Cell cycle</keyword>
<keyword id="KW-0132">Cell division</keyword>
<name>MINE_KLEP3</name>
<accession>B5XQ69</accession>
<gene>
    <name evidence="1" type="primary">minE</name>
    <name type="ordered locus">KPK_1973</name>
</gene>
<evidence type="ECO:0000255" key="1">
    <source>
        <dbReference type="HAMAP-Rule" id="MF_00262"/>
    </source>
</evidence>